<dbReference type="EC" id="1.8.1.2" evidence="1"/>
<dbReference type="EMBL" id="CP000967">
    <property type="protein sequence ID" value="ACD60247.1"/>
    <property type="molecule type" value="Genomic_DNA"/>
</dbReference>
<dbReference type="RefSeq" id="WP_011259872.1">
    <property type="nucleotide sequence ID" value="NC_010717.2"/>
</dbReference>
<dbReference type="SMR" id="B2SI05"/>
<dbReference type="KEGG" id="xop:PXO_02132"/>
<dbReference type="eggNOG" id="COG0155">
    <property type="taxonomic scope" value="Bacteria"/>
</dbReference>
<dbReference type="HOGENOM" id="CLU_001975_3_2_6"/>
<dbReference type="UniPathway" id="UPA00140">
    <property type="reaction ID" value="UER00207"/>
</dbReference>
<dbReference type="Proteomes" id="UP000001740">
    <property type="component" value="Chromosome"/>
</dbReference>
<dbReference type="GO" id="GO:0009337">
    <property type="term" value="C:sulfite reductase complex (NADPH)"/>
    <property type="evidence" value="ECO:0007669"/>
    <property type="project" value="InterPro"/>
</dbReference>
<dbReference type="GO" id="GO:0051539">
    <property type="term" value="F:4 iron, 4 sulfur cluster binding"/>
    <property type="evidence" value="ECO:0007669"/>
    <property type="project" value="UniProtKB-KW"/>
</dbReference>
<dbReference type="GO" id="GO:0020037">
    <property type="term" value="F:heme binding"/>
    <property type="evidence" value="ECO:0007669"/>
    <property type="project" value="InterPro"/>
</dbReference>
<dbReference type="GO" id="GO:0046872">
    <property type="term" value="F:metal ion binding"/>
    <property type="evidence" value="ECO:0007669"/>
    <property type="project" value="UniProtKB-KW"/>
</dbReference>
<dbReference type="GO" id="GO:0050661">
    <property type="term" value="F:NADP binding"/>
    <property type="evidence" value="ECO:0007669"/>
    <property type="project" value="InterPro"/>
</dbReference>
<dbReference type="GO" id="GO:0050311">
    <property type="term" value="F:sulfite reductase (ferredoxin) activity"/>
    <property type="evidence" value="ECO:0007669"/>
    <property type="project" value="TreeGrafter"/>
</dbReference>
<dbReference type="GO" id="GO:0004783">
    <property type="term" value="F:sulfite reductase (NADPH) activity"/>
    <property type="evidence" value="ECO:0007669"/>
    <property type="project" value="UniProtKB-UniRule"/>
</dbReference>
<dbReference type="GO" id="GO:0019344">
    <property type="term" value="P:cysteine biosynthetic process"/>
    <property type="evidence" value="ECO:0007669"/>
    <property type="project" value="UniProtKB-KW"/>
</dbReference>
<dbReference type="GO" id="GO:0070814">
    <property type="term" value="P:hydrogen sulfide biosynthetic process"/>
    <property type="evidence" value="ECO:0007669"/>
    <property type="project" value="UniProtKB-UniRule"/>
</dbReference>
<dbReference type="GO" id="GO:0000103">
    <property type="term" value="P:sulfate assimilation"/>
    <property type="evidence" value="ECO:0007669"/>
    <property type="project" value="UniProtKB-UniRule"/>
</dbReference>
<dbReference type="FunFam" id="3.30.413.10:FF:000003">
    <property type="entry name" value="Sulfite reductase [NADPH] hemoprotein beta-component"/>
    <property type="match status" value="1"/>
</dbReference>
<dbReference type="Gene3D" id="3.30.413.10">
    <property type="entry name" value="Sulfite Reductase Hemoprotein, domain 1"/>
    <property type="match status" value="2"/>
</dbReference>
<dbReference type="HAMAP" id="MF_01540">
    <property type="entry name" value="CysI"/>
    <property type="match status" value="1"/>
</dbReference>
<dbReference type="InterPro" id="IPR011786">
    <property type="entry name" value="CysI"/>
</dbReference>
<dbReference type="InterPro" id="IPR005117">
    <property type="entry name" value="NiRdtase/SiRdtase_haem-b_fer"/>
</dbReference>
<dbReference type="InterPro" id="IPR036136">
    <property type="entry name" value="Nit/Sulf_reduc_fer-like_dom_sf"/>
</dbReference>
<dbReference type="InterPro" id="IPR006067">
    <property type="entry name" value="NO2/SO3_Rdtase_4Fe4S_dom"/>
</dbReference>
<dbReference type="InterPro" id="IPR045169">
    <property type="entry name" value="NO2/SO3_Rdtase_4Fe4S_prot"/>
</dbReference>
<dbReference type="InterPro" id="IPR045854">
    <property type="entry name" value="NO2/SO3_Rdtase_4Fe4S_sf"/>
</dbReference>
<dbReference type="InterPro" id="IPR006066">
    <property type="entry name" value="NO2/SO3_Rdtase_FeS/sirohaem_BS"/>
</dbReference>
<dbReference type="NCBIfam" id="TIGR02041">
    <property type="entry name" value="CysI"/>
    <property type="match status" value="1"/>
</dbReference>
<dbReference type="NCBIfam" id="NF010029">
    <property type="entry name" value="PRK13504.1"/>
    <property type="match status" value="1"/>
</dbReference>
<dbReference type="PANTHER" id="PTHR11493:SF47">
    <property type="entry name" value="SULFITE REDUCTASE [NADPH] SUBUNIT BETA"/>
    <property type="match status" value="1"/>
</dbReference>
<dbReference type="PANTHER" id="PTHR11493">
    <property type="entry name" value="SULFITE REDUCTASE [NADPH] SUBUNIT BETA-RELATED"/>
    <property type="match status" value="1"/>
</dbReference>
<dbReference type="Pfam" id="PF01077">
    <property type="entry name" value="NIR_SIR"/>
    <property type="match status" value="1"/>
</dbReference>
<dbReference type="Pfam" id="PF03460">
    <property type="entry name" value="NIR_SIR_ferr"/>
    <property type="match status" value="2"/>
</dbReference>
<dbReference type="PRINTS" id="PR00397">
    <property type="entry name" value="SIROHAEM"/>
</dbReference>
<dbReference type="SUPFAM" id="SSF56014">
    <property type="entry name" value="Nitrite and sulphite reductase 4Fe-4S domain-like"/>
    <property type="match status" value="2"/>
</dbReference>
<dbReference type="SUPFAM" id="SSF55124">
    <property type="entry name" value="Nitrite/Sulfite reductase N-terminal domain-like"/>
    <property type="match status" value="2"/>
</dbReference>
<dbReference type="PROSITE" id="PS00365">
    <property type="entry name" value="NIR_SIR"/>
    <property type="match status" value="1"/>
</dbReference>
<organism>
    <name type="scientific">Xanthomonas oryzae pv. oryzae (strain PXO99A)</name>
    <dbReference type="NCBI Taxonomy" id="360094"/>
    <lineage>
        <taxon>Bacteria</taxon>
        <taxon>Pseudomonadati</taxon>
        <taxon>Pseudomonadota</taxon>
        <taxon>Gammaproteobacteria</taxon>
        <taxon>Lysobacterales</taxon>
        <taxon>Lysobacteraceae</taxon>
        <taxon>Xanthomonas</taxon>
    </lineage>
</organism>
<feature type="chain" id="PRO_0000388534" description="Sulfite reductase [NADPH] hemoprotein beta-component">
    <location>
        <begin position="1"/>
        <end position="568"/>
    </location>
</feature>
<feature type="binding site" evidence="1">
    <location>
        <position position="425"/>
    </location>
    <ligand>
        <name>[4Fe-4S] cluster</name>
        <dbReference type="ChEBI" id="CHEBI:49883"/>
    </ligand>
</feature>
<feature type="binding site" evidence="1">
    <location>
        <position position="431"/>
    </location>
    <ligand>
        <name>[4Fe-4S] cluster</name>
        <dbReference type="ChEBI" id="CHEBI:49883"/>
    </ligand>
</feature>
<feature type="binding site" evidence="1">
    <location>
        <position position="470"/>
    </location>
    <ligand>
        <name>[4Fe-4S] cluster</name>
        <dbReference type="ChEBI" id="CHEBI:49883"/>
    </ligand>
</feature>
<feature type="binding site" evidence="1">
    <location>
        <position position="474"/>
    </location>
    <ligand>
        <name>[4Fe-4S] cluster</name>
        <dbReference type="ChEBI" id="CHEBI:49883"/>
    </ligand>
</feature>
<feature type="binding site" description="axial binding residue" evidence="1">
    <location>
        <position position="474"/>
    </location>
    <ligand>
        <name>siroheme</name>
        <dbReference type="ChEBI" id="CHEBI:60052"/>
    </ligand>
    <ligandPart>
        <name>Fe</name>
        <dbReference type="ChEBI" id="CHEBI:18248"/>
    </ligandPart>
</feature>
<keyword id="KW-0004">4Fe-4S</keyword>
<keyword id="KW-0028">Amino-acid biosynthesis</keyword>
<keyword id="KW-0198">Cysteine biosynthesis</keyword>
<keyword id="KW-0349">Heme</keyword>
<keyword id="KW-0408">Iron</keyword>
<keyword id="KW-0411">Iron-sulfur</keyword>
<keyword id="KW-0479">Metal-binding</keyword>
<keyword id="KW-0521">NADP</keyword>
<keyword id="KW-0560">Oxidoreductase</keyword>
<reference key="1">
    <citation type="journal article" date="2008" name="BMC Genomics">
        <title>Genome sequence and rapid evolution of the rice pathogen Xanthomonas oryzae pv. oryzae PXO99A.</title>
        <authorList>
            <person name="Salzberg S.L."/>
            <person name="Sommer D.D."/>
            <person name="Schatz M.C."/>
            <person name="Phillippy A.M."/>
            <person name="Rabinowicz P.D."/>
            <person name="Tsuge S."/>
            <person name="Furutani A."/>
            <person name="Ochiai H."/>
            <person name="Delcher A.L."/>
            <person name="Kelley D."/>
            <person name="Madupu R."/>
            <person name="Puiu D."/>
            <person name="Radune D."/>
            <person name="Shumway M."/>
            <person name="Trapnell C."/>
            <person name="Aparna G."/>
            <person name="Jha G."/>
            <person name="Pandey A."/>
            <person name="Patil P.B."/>
            <person name="Ishihara H."/>
            <person name="Meyer D.F."/>
            <person name="Szurek B."/>
            <person name="Verdier V."/>
            <person name="Koebnik R."/>
            <person name="Dow J.M."/>
            <person name="Ryan R.P."/>
            <person name="Hirata H."/>
            <person name="Tsuyumu S."/>
            <person name="Won Lee S."/>
            <person name="Seo Y.-S."/>
            <person name="Sriariyanum M."/>
            <person name="Ronald P.C."/>
            <person name="Sonti R.V."/>
            <person name="Van Sluys M.-A."/>
            <person name="Leach J.E."/>
            <person name="White F.F."/>
            <person name="Bogdanove A.J."/>
        </authorList>
    </citation>
    <scope>NUCLEOTIDE SEQUENCE [LARGE SCALE GENOMIC DNA]</scope>
    <source>
        <strain>PXO99A</strain>
    </source>
</reference>
<name>CYSI_XANOP</name>
<sequence length="568" mass="62400">MSHSVEDIKSESRRLRGSLEQSLADAVTGALREDDQTLIKYHGSYQQDDRDIRDERRQQKLEPAYQFMIRTRTPGGVITPAQWLALDGIATRYANHSLRITTRQAFQFHGVIKRELKATMQAINATLIDTLAACGDVNRNVQVAANPLLSQAHATLYADAACVSEHLLPNTRAYYEIWLDEERVSGSGNEDEPIYGDRYLPRKFKIGFAAPPLNDVDVFANDLGFIAILRDGRLLGYNVSIGGGMGASHGDAQTWPRVANVIGFVTRDQLLDIATAVVTTQRDFGNRAVRKRARFKYTIDDHGLDTIVAEIARRAGFALQPAQPFAFEHNGDRYGWVEGEDGLWHLTLSLPAGRIADTDTATHLSGLRAIAQLNVGEFRMTPNQNLVIAGVPASERARVDALVAQYALDAGNRSASALARGAMACVALPTCGLAMAEAERYLPDFSAALQPLLQQHGLADTPIVLRLSGCPNGCSRPYLAEIALVGKAPGRYNLMLGGDRRGQRLNTLYRENITEPEILAALEPLLARYAAERDHANDEGFGDFLHRAGLIALPSYPTHRRLDLELLA</sequence>
<accession>B2SI05</accession>
<evidence type="ECO:0000255" key="1">
    <source>
        <dbReference type="HAMAP-Rule" id="MF_01540"/>
    </source>
</evidence>
<proteinExistence type="inferred from homology"/>
<gene>
    <name evidence="1" type="primary">cysI</name>
    <name type="ordered locus">PXO_02132</name>
</gene>
<protein>
    <recommendedName>
        <fullName evidence="1">Sulfite reductase [NADPH] hemoprotein beta-component</fullName>
        <shortName evidence="1">SiR-HP</shortName>
        <shortName evidence="1">SiRHP</shortName>
        <ecNumber evidence="1">1.8.1.2</ecNumber>
    </recommendedName>
</protein>
<comment type="function">
    <text evidence="1">Component of the sulfite reductase complex that catalyzes the 6-electron reduction of sulfite to sulfide. This is one of several activities required for the biosynthesis of L-cysteine from sulfate.</text>
</comment>
<comment type="catalytic activity">
    <reaction evidence="1">
        <text>hydrogen sulfide + 3 NADP(+) + 3 H2O = sulfite + 3 NADPH + 4 H(+)</text>
        <dbReference type="Rhea" id="RHEA:13801"/>
        <dbReference type="ChEBI" id="CHEBI:15377"/>
        <dbReference type="ChEBI" id="CHEBI:15378"/>
        <dbReference type="ChEBI" id="CHEBI:17359"/>
        <dbReference type="ChEBI" id="CHEBI:29919"/>
        <dbReference type="ChEBI" id="CHEBI:57783"/>
        <dbReference type="ChEBI" id="CHEBI:58349"/>
        <dbReference type="EC" id="1.8.1.2"/>
    </reaction>
</comment>
<comment type="cofactor">
    <cofactor evidence="1">
        <name>siroheme</name>
        <dbReference type="ChEBI" id="CHEBI:60052"/>
    </cofactor>
    <text evidence="1">Binds 1 siroheme per subunit.</text>
</comment>
<comment type="cofactor">
    <cofactor evidence="1">
        <name>[4Fe-4S] cluster</name>
        <dbReference type="ChEBI" id="CHEBI:49883"/>
    </cofactor>
    <text evidence="1">Binds 1 [4Fe-4S] cluster per subunit.</text>
</comment>
<comment type="pathway">
    <text evidence="1">Sulfur metabolism; hydrogen sulfide biosynthesis; hydrogen sulfide from sulfite (NADPH route): step 1/1.</text>
</comment>
<comment type="subunit">
    <text evidence="1">Alpha(8)-beta(8). The alpha component is a flavoprotein, the beta component is a hemoprotein.</text>
</comment>
<comment type="similarity">
    <text evidence="1">Belongs to the nitrite and sulfite reductase 4Fe-4S domain family.</text>
</comment>